<dbReference type="EC" id="6.1.1.6" evidence="1"/>
<dbReference type="EMBL" id="CP000139">
    <property type="protein sequence ID" value="ABR41709.1"/>
    <property type="molecule type" value="Genomic_DNA"/>
</dbReference>
<dbReference type="RefSeq" id="WP_012056015.1">
    <property type="nucleotide sequence ID" value="NZ_JANSWM010000087.1"/>
</dbReference>
<dbReference type="SMR" id="A6L7P5"/>
<dbReference type="STRING" id="435590.BVU_4107"/>
<dbReference type="PaxDb" id="435590-BVU_4107"/>
<dbReference type="GeneID" id="5305066"/>
<dbReference type="KEGG" id="bvu:BVU_4107"/>
<dbReference type="eggNOG" id="COG1190">
    <property type="taxonomic scope" value="Bacteria"/>
</dbReference>
<dbReference type="HOGENOM" id="CLU_008255_6_0_10"/>
<dbReference type="BioCyc" id="BVUL435590:G1G59-4245-MONOMER"/>
<dbReference type="Proteomes" id="UP000002861">
    <property type="component" value="Chromosome"/>
</dbReference>
<dbReference type="GO" id="GO:0005829">
    <property type="term" value="C:cytosol"/>
    <property type="evidence" value="ECO:0007669"/>
    <property type="project" value="TreeGrafter"/>
</dbReference>
<dbReference type="GO" id="GO:0005524">
    <property type="term" value="F:ATP binding"/>
    <property type="evidence" value="ECO:0007669"/>
    <property type="project" value="UniProtKB-UniRule"/>
</dbReference>
<dbReference type="GO" id="GO:0004824">
    <property type="term" value="F:lysine-tRNA ligase activity"/>
    <property type="evidence" value="ECO:0007669"/>
    <property type="project" value="UniProtKB-UniRule"/>
</dbReference>
<dbReference type="GO" id="GO:0000287">
    <property type="term" value="F:magnesium ion binding"/>
    <property type="evidence" value="ECO:0007669"/>
    <property type="project" value="UniProtKB-UniRule"/>
</dbReference>
<dbReference type="GO" id="GO:0000049">
    <property type="term" value="F:tRNA binding"/>
    <property type="evidence" value="ECO:0007669"/>
    <property type="project" value="TreeGrafter"/>
</dbReference>
<dbReference type="GO" id="GO:0006430">
    <property type="term" value="P:lysyl-tRNA aminoacylation"/>
    <property type="evidence" value="ECO:0007669"/>
    <property type="project" value="UniProtKB-UniRule"/>
</dbReference>
<dbReference type="CDD" id="cd00775">
    <property type="entry name" value="LysRS_core"/>
    <property type="match status" value="1"/>
</dbReference>
<dbReference type="CDD" id="cd04322">
    <property type="entry name" value="LysRS_N"/>
    <property type="match status" value="1"/>
</dbReference>
<dbReference type="FunFam" id="2.40.50.140:FF:000024">
    <property type="entry name" value="Lysine--tRNA ligase"/>
    <property type="match status" value="1"/>
</dbReference>
<dbReference type="FunFam" id="3.30.930.10:FF:000238">
    <property type="entry name" value="Lysine--tRNA ligase"/>
    <property type="match status" value="1"/>
</dbReference>
<dbReference type="Gene3D" id="3.30.930.10">
    <property type="entry name" value="Bira Bifunctional Protein, Domain 2"/>
    <property type="match status" value="1"/>
</dbReference>
<dbReference type="Gene3D" id="2.40.50.140">
    <property type="entry name" value="Nucleic acid-binding proteins"/>
    <property type="match status" value="1"/>
</dbReference>
<dbReference type="HAMAP" id="MF_00252">
    <property type="entry name" value="Lys_tRNA_synth_class2"/>
    <property type="match status" value="1"/>
</dbReference>
<dbReference type="InterPro" id="IPR004364">
    <property type="entry name" value="Aa-tRNA-synt_II"/>
</dbReference>
<dbReference type="InterPro" id="IPR006195">
    <property type="entry name" value="aa-tRNA-synth_II"/>
</dbReference>
<dbReference type="InterPro" id="IPR045864">
    <property type="entry name" value="aa-tRNA-synth_II/BPL/LPL"/>
</dbReference>
<dbReference type="InterPro" id="IPR002313">
    <property type="entry name" value="Lys-tRNA-ligase_II"/>
</dbReference>
<dbReference type="InterPro" id="IPR044136">
    <property type="entry name" value="Lys-tRNA-ligase_II_N"/>
</dbReference>
<dbReference type="InterPro" id="IPR018149">
    <property type="entry name" value="Lys-tRNA-synth_II_C"/>
</dbReference>
<dbReference type="InterPro" id="IPR012340">
    <property type="entry name" value="NA-bd_OB-fold"/>
</dbReference>
<dbReference type="InterPro" id="IPR004365">
    <property type="entry name" value="NA-bd_OB_tRNA"/>
</dbReference>
<dbReference type="NCBIfam" id="TIGR00499">
    <property type="entry name" value="lysS_bact"/>
    <property type="match status" value="1"/>
</dbReference>
<dbReference type="NCBIfam" id="NF001756">
    <property type="entry name" value="PRK00484.1"/>
    <property type="match status" value="1"/>
</dbReference>
<dbReference type="PANTHER" id="PTHR42918:SF15">
    <property type="entry name" value="LYSINE--TRNA LIGASE, CHLOROPLASTIC_MITOCHONDRIAL"/>
    <property type="match status" value="1"/>
</dbReference>
<dbReference type="PANTHER" id="PTHR42918">
    <property type="entry name" value="LYSYL-TRNA SYNTHETASE"/>
    <property type="match status" value="1"/>
</dbReference>
<dbReference type="Pfam" id="PF00152">
    <property type="entry name" value="tRNA-synt_2"/>
    <property type="match status" value="1"/>
</dbReference>
<dbReference type="Pfam" id="PF01336">
    <property type="entry name" value="tRNA_anti-codon"/>
    <property type="match status" value="1"/>
</dbReference>
<dbReference type="PRINTS" id="PR00982">
    <property type="entry name" value="TRNASYNTHLYS"/>
</dbReference>
<dbReference type="SUPFAM" id="SSF55681">
    <property type="entry name" value="Class II aaRS and biotin synthetases"/>
    <property type="match status" value="1"/>
</dbReference>
<dbReference type="SUPFAM" id="SSF50249">
    <property type="entry name" value="Nucleic acid-binding proteins"/>
    <property type="match status" value="1"/>
</dbReference>
<dbReference type="PROSITE" id="PS50862">
    <property type="entry name" value="AA_TRNA_LIGASE_II"/>
    <property type="match status" value="1"/>
</dbReference>
<organism>
    <name type="scientific">Phocaeicola vulgatus (strain ATCC 8482 / DSM 1447 / JCM 5826 / CCUG 4940 / NBRC 14291 / NCTC 11154)</name>
    <name type="common">Bacteroides vulgatus</name>
    <dbReference type="NCBI Taxonomy" id="435590"/>
    <lineage>
        <taxon>Bacteria</taxon>
        <taxon>Pseudomonadati</taxon>
        <taxon>Bacteroidota</taxon>
        <taxon>Bacteroidia</taxon>
        <taxon>Bacteroidales</taxon>
        <taxon>Bacteroidaceae</taxon>
        <taxon>Phocaeicola</taxon>
    </lineage>
</organism>
<keyword id="KW-0030">Aminoacyl-tRNA synthetase</keyword>
<keyword id="KW-0067">ATP-binding</keyword>
<keyword id="KW-0963">Cytoplasm</keyword>
<keyword id="KW-0436">Ligase</keyword>
<keyword id="KW-0460">Magnesium</keyword>
<keyword id="KW-0479">Metal-binding</keyword>
<keyword id="KW-0547">Nucleotide-binding</keyword>
<keyword id="KW-0648">Protein biosynthesis</keyword>
<evidence type="ECO:0000255" key="1">
    <source>
        <dbReference type="HAMAP-Rule" id="MF_00252"/>
    </source>
</evidence>
<gene>
    <name evidence="1" type="primary">lysS</name>
    <name type="ordered locus">BVU_4107</name>
</gene>
<protein>
    <recommendedName>
        <fullName evidence="1">Lysine--tRNA ligase</fullName>
        <ecNumber evidence="1">6.1.1.6</ecNumber>
    </recommendedName>
    <alternativeName>
        <fullName evidence="1">Lysyl-tRNA synthetase</fullName>
        <shortName evidence="1">LysRS</shortName>
    </alternativeName>
</protein>
<reference key="1">
    <citation type="journal article" date="2007" name="PLoS Biol.">
        <title>Evolution of symbiotic bacteria in the distal human intestine.</title>
        <authorList>
            <person name="Xu J."/>
            <person name="Mahowald M.A."/>
            <person name="Ley R.E."/>
            <person name="Lozupone C.A."/>
            <person name="Hamady M."/>
            <person name="Martens E.C."/>
            <person name="Henrissat B."/>
            <person name="Coutinho P.M."/>
            <person name="Minx P."/>
            <person name="Latreille P."/>
            <person name="Cordum H."/>
            <person name="Van Brunt A."/>
            <person name="Kim K."/>
            <person name="Fulton R.S."/>
            <person name="Fulton L.A."/>
            <person name="Clifton S.W."/>
            <person name="Wilson R.K."/>
            <person name="Knight R.D."/>
            <person name="Gordon J.I."/>
        </authorList>
    </citation>
    <scope>NUCLEOTIDE SEQUENCE [LARGE SCALE GENOMIC DNA]</scope>
    <source>
        <strain>ATCC 8482 / DSM 1447 / JCM 5826 / CCUG 4940 / NBRC 14291 / NCTC 11154</strain>
    </source>
</reference>
<sequence>MNVLELSEQEIIRRNSLNELRAMGIEPYPAAEYVTNAFSTDIKAEFKDDEEPRKVSVAGRMMSRRVMGKASFIELQDSKGRIQVYITRDDICPDENKEMYNTVFKRLLDLGDFIGIEGFVFRTQMGEISIHAKKLTVLSKSIKPLPIVKYKDGVAYDKFEDPELRYRQRYVDLAVNEEIKDIFIKRSKVYSSMREYFNSKGYMEVETPILQSIAGGAAARPFITHHNALDMPLYMRIASELYLKRLIVGGFEGVYEIGKNFRNEGMDRTHNPEFTCMEIYVAYKDYNWMMEFTEKMIEKICLDVNGTTQVKVGDNIIDFKAPYKRVTMLDSIKEHTGYDLTGMNEEQIREVCQKLNMEIDDTMGKGKLIDEIFGEFCEGTYIQPTFITDYPKEMSPLTKIHRSNPDLTERFELMVNGKELCNAYSELNDPIDQLERFEEQMKLSEKGDDEAMIIDKDFVRALEYGMPPTSGMGIGMDRLTMLMTGQSTIQEVLFFPQMRPEKITPKDTPAKFMELGISEDWVPVIQKAGYNLVSDMKEVNPQKLHMDICGINKKYKLELTNPTVDEVAGWIAKIEN</sequence>
<name>SYK_PHOV8</name>
<feature type="chain" id="PRO_1000012847" description="Lysine--tRNA ligase">
    <location>
        <begin position="1"/>
        <end position="576"/>
    </location>
</feature>
<feature type="binding site" evidence="1">
    <location>
        <position position="412"/>
    </location>
    <ligand>
        <name>Mg(2+)</name>
        <dbReference type="ChEBI" id="CHEBI:18420"/>
        <label>1</label>
    </ligand>
</feature>
<feature type="binding site" evidence="1">
    <location>
        <position position="419"/>
    </location>
    <ligand>
        <name>Mg(2+)</name>
        <dbReference type="ChEBI" id="CHEBI:18420"/>
        <label>1</label>
    </ligand>
</feature>
<feature type="binding site" evidence="1">
    <location>
        <position position="419"/>
    </location>
    <ligand>
        <name>Mg(2+)</name>
        <dbReference type="ChEBI" id="CHEBI:18420"/>
        <label>2</label>
    </ligand>
</feature>
<proteinExistence type="inferred from homology"/>
<comment type="catalytic activity">
    <reaction evidence="1">
        <text>tRNA(Lys) + L-lysine + ATP = L-lysyl-tRNA(Lys) + AMP + diphosphate</text>
        <dbReference type="Rhea" id="RHEA:20792"/>
        <dbReference type="Rhea" id="RHEA-COMP:9696"/>
        <dbReference type="Rhea" id="RHEA-COMP:9697"/>
        <dbReference type="ChEBI" id="CHEBI:30616"/>
        <dbReference type="ChEBI" id="CHEBI:32551"/>
        <dbReference type="ChEBI" id="CHEBI:33019"/>
        <dbReference type="ChEBI" id="CHEBI:78442"/>
        <dbReference type="ChEBI" id="CHEBI:78529"/>
        <dbReference type="ChEBI" id="CHEBI:456215"/>
        <dbReference type="EC" id="6.1.1.6"/>
    </reaction>
</comment>
<comment type="cofactor">
    <cofactor evidence="1">
        <name>Mg(2+)</name>
        <dbReference type="ChEBI" id="CHEBI:18420"/>
    </cofactor>
    <text evidence="1">Binds 3 Mg(2+) ions per subunit.</text>
</comment>
<comment type="subunit">
    <text evidence="1">Homodimer.</text>
</comment>
<comment type="subcellular location">
    <subcellularLocation>
        <location evidence="1">Cytoplasm</location>
    </subcellularLocation>
</comment>
<comment type="similarity">
    <text evidence="1">Belongs to the class-II aminoacyl-tRNA synthetase family.</text>
</comment>
<accession>A6L7P5</accession>